<organism>
    <name type="scientific">Mytilus coruscus</name>
    <name type="common">Sea mussel</name>
    <dbReference type="NCBI Taxonomy" id="42192"/>
    <lineage>
        <taxon>Eukaryota</taxon>
        <taxon>Metazoa</taxon>
        <taxon>Spiralia</taxon>
        <taxon>Lophotrochozoa</taxon>
        <taxon>Mollusca</taxon>
        <taxon>Bivalvia</taxon>
        <taxon>Autobranchia</taxon>
        <taxon>Pteriomorphia</taxon>
        <taxon>Mytilida</taxon>
        <taxon>Mytiloidea</taxon>
        <taxon>Mytilidae</taxon>
        <taxon>Mytilinae</taxon>
        <taxon>Mytilus</taxon>
    </lineage>
</organism>
<gene>
    <name type="primary">FP1</name>
</gene>
<protein>
    <recommendedName>
        <fullName>Adhesive plaque matrix protein</fullName>
    </recommendedName>
    <alternativeName>
        <fullName>Foot protein 1</fullName>
    </alternativeName>
    <alternativeName>
        <fullName>MCFP1</fullName>
    </alternativeName>
</protein>
<name>FP1_MYTCO</name>
<comment type="function">
    <text>Provides adhesiveness to the mussel's foot. Mussels produce one of the strongest water insoluble glues. The mussel's adhesive is a bundle of threads, called a byssus, formed by a fibrous collagenous core coated with adhesive proteins.</text>
</comment>
<comment type="subcellular location">
    <subcellularLocation>
        <location>Secreted</location>
    </subcellularLocation>
</comment>
<comment type="tissue specificity">
    <text>Produced by the byssal gland.</text>
</comment>
<comment type="domain">
    <text>Almost exclusively composed of repeats of a decapeptide.</text>
</comment>
<comment type="PTM">
    <text>Hydroxylated on proline (mono- or dihydroxylation) and tyrosine residues (to L-DOPA = 3',4'-dihydroxyphenylalanine) of the tandem repeats.</text>
</comment>
<comment type="online information" name="Protein Spotlight">
    <link uri="https://www.proteinspotlight.org/back_issues/002"/>
    <text>Sticky business - Issue 2 of September 2001</text>
</comment>
<dbReference type="EMBL" id="D63777">
    <property type="protein sequence ID" value="BAA09850.1"/>
    <property type="molecule type" value="mRNA"/>
</dbReference>
<dbReference type="GO" id="GO:0005576">
    <property type="term" value="C:extracellular region"/>
    <property type="evidence" value="ECO:0007669"/>
    <property type="project" value="UniProtKB-SubCell"/>
</dbReference>
<dbReference type="InterPro" id="IPR002964">
    <property type="entry name" value="Adhesive_plaq"/>
</dbReference>
<dbReference type="PRINTS" id="PR01216">
    <property type="entry name" value="ADHESIVEI"/>
</dbReference>
<evidence type="ECO:0000255" key="1"/>
<evidence type="ECO:0000256" key="2">
    <source>
        <dbReference type="SAM" id="MobiDB-lite"/>
    </source>
</evidence>
<proteinExistence type="evidence at transcript level"/>
<feature type="signal peptide" evidence="1">
    <location>
        <begin position="1"/>
        <end position="20"/>
    </location>
</feature>
<feature type="chain" id="PRO_0000021285" description="Adhesive plaque matrix protein">
    <location>
        <begin position="21"/>
        <end position="872"/>
    </location>
</feature>
<feature type="repeat" description="1">
    <location>
        <begin position="124"/>
        <end position="133"/>
    </location>
</feature>
<feature type="repeat" description="2">
    <location>
        <begin position="134"/>
        <end position="143"/>
    </location>
</feature>
<feature type="repeat" description="3">
    <location>
        <begin position="144"/>
        <end position="153"/>
    </location>
</feature>
<feature type="repeat" description="4">
    <location>
        <begin position="154"/>
        <end position="163"/>
    </location>
</feature>
<feature type="repeat" description="5">
    <location>
        <begin position="174"/>
        <end position="183"/>
    </location>
</feature>
<feature type="repeat" description="6">
    <location>
        <begin position="184"/>
        <end position="192"/>
    </location>
</feature>
<feature type="repeat" description="7">
    <location>
        <begin position="193"/>
        <end position="202"/>
    </location>
</feature>
<feature type="repeat" description="8">
    <location>
        <begin position="203"/>
        <end position="212"/>
    </location>
</feature>
<feature type="repeat" description="9">
    <location>
        <begin position="213"/>
        <end position="221"/>
    </location>
</feature>
<feature type="repeat" description="10">
    <location>
        <begin position="222"/>
        <end position="231"/>
    </location>
</feature>
<feature type="repeat" description="11">
    <location>
        <begin position="232"/>
        <end position="241"/>
    </location>
</feature>
<feature type="repeat" description="12">
    <location>
        <begin position="242"/>
        <end position="251"/>
    </location>
</feature>
<feature type="repeat" description="13">
    <location>
        <begin position="252"/>
        <end position="261"/>
    </location>
</feature>
<feature type="repeat" description="14">
    <location>
        <begin position="262"/>
        <end position="271"/>
    </location>
</feature>
<feature type="repeat" description="15">
    <location>
        <begin position="272"/>
        <end position="281"/>
    </location>
</feature>
<feature type="repeat" description="16">
    <location>
        <begin position="282"/>
        <end position="291"/>
    </location>
</feature>
<feature type="repeat" description="17">
    <location>
        <begin position="292"/>
        <end position="301"/>
    </location>
</feature>
<feature type="repeat" description="18">
    <location>
        <begin position="302"/>
        <end position="311"/>
    </location>
</feature>
<feature type="repeat" description="19">
    <location>
        <begin position="312"/>
        <end position="321"/>
    </location>
</feature>
<feature type="repeat" description="20">
    <location>
        <begin position="322"/>
        <end position="331"/>
    </location>
</feature>
<feature type="repeat" description="21">
    <location>
        <begin position="332"/>
        <end position="341"/>
    </location>
</feature>
<feature type="repeat" description="22">
    <location>
        <begin position="342"/>
        <end position="351"/>
    </location>
</feature>
<feature type="repeat" description="23">
    <location>
        <begin position="352"/>
        <end position="361"/>
    </location>
</feature>
<feature type="repeat" description="24">
    <location>
        <begin position="362"/>
        <end position="371"/>
    </location>
</feature>
<feature type="repeat" description="25">
    <location>
        <begin position="372"/>
        <end position="381"/>
    </location>
</feature>
<feature type="repeat" description="26">
    <location>
        <begin position="382"/>
        <end position="391"/>
    </location>
</feature>
<feature type="repeat" description="27">
    <location>
        <begin position="402"/>
        <end position="411"/>
    </location>
</feature>
<feature type="repeat" description="28">
    <location>
        <begin position="412"/>
        <end position="421"/>
    </location>
</feature>
<feature type="repeat" description="29">
    <location>
        <begin position="422"/>
        <end position="431"/>
    </location>
</feature>
<feature type="repeat" description="30">
    <location>
        <begin position="432"/>
        <end position="441"/>
    </location>
</feature>
<feature type="repeat" description="31">
    <location>
        <begin position="442"/>
        <end position="451"/>
    </location>
</feature>
<feature type="repeat" description="32">
    <location>
        <begin position="452"/>
        <end position="461"/>
    </location>
</feature>
<feature type="repeat" description="33">
    <location>
        <begin position="462"/>
        <end position="471"/>
    </location>
</feature>
<feature type="repeat" description="34">
    <location>
        <begin position="472"/>
        <end position="481"/>
    </location>
</feature>
<feature type="repeat" description="35">
    <location>
        <begin position="482"/>
        <end position="491"/>
    </location>
</feature>
<feature type="repeat" description="36">
    <location>
        <begin position="502"/>
        <end position="511"/>
    </location>
</feature>
<feature type="repeat" description="37">
    <location>
        <begin position="512"/>
        <end position="521"/>
    </location>
</feature>
<feature type="repeat" description="38">
    <location>
        <begin position="522"/>
        <end position="531"/>
    </location>
</feature>
<feature type="repeat" description="39">
    <location>
        <begin position="532"/>
        <end position="541"/>
    </location>
</feature>
<feature type="repeat" description="40">
    <location>
        <begin position="542"/>
        <end position="551"/>
    </location>
</feature>
<feature type="repeat" description="41">
    <location>
        <begin position="552"/>
        <end position="561"/>
    </location>
</feature>
<feature type="repeat" description="42">
    <location>
        <begin position="562"/>
        <end position="571"/>
    </location>
</feature>
<feature type="repeat" description="43">
    <location>
        <begin position="572"/>
        <end position="581"/>
    </location>
</feature>
<feature type="repeat" description="44">
    <location>
        <begin position="582"/>
        <end position="591"/>
    </location>
</feature>
<feature type="repeat" description="45">
    <location>
        <begin position="602"/>
        <end position="611"/>
    </location>
</feature>
<feature type="repeat" description="46">
    <location>
        <begin position="612"/>
        <end position="621"/>
    </location>
</feature>
<feature type="repeat" description="47">
    <location>
        <begin position="622"/>
        <end position="631"/>
    </location>
</feature>
<feature type="repeat" description="48">
    <location>
        <begin position="632"/>
        <end position="641"/>
    </location>
</feature>
<feature type="repeat" description="49">
    <location>
        <begin position="642"/>
        <end position="651"/>
    </location>
</feature>
<feature type="repeat" description="50">
    <location>
        <begin position="652"/>
        <end position="661"/>
    </location>
</feature>
<feature type="repeat" description="51">
    <location>
        <begin position="662"/>
        <end position="671"/>
    </location>
</feature>
<feature type="repeat" description="52">
    <location>
        <begin position="672"/>
        <end position="681"/>
    </location>
</feature>
<feature type="repeat" description="53">
    <location>
        <begin position="682"/>
        <end position="691"/>
    </location>
</feature>
<feature type="repeat" description="54">
    <location>
        <begin position="702"/>
        <end position="711"/>
    </location>
</feature>
<feature type="repeat" description="55">
    <location>
        <begin position="712"/>
        <end position="721"/>
    </location>
</feature>
<feature type="repeat" description="56">
    <location>
        <begin position="722"/>
        <end position="731"/>
    </location>
</feature>
<feature type="repeat" description="57">
    <location>
        <begin position="732"/>
        <end position="741"/>
    </location>
</feature>
<feature type="repeat" description="58">
    <location>
        <begin position="742"/>
        <end position="751"/>
    </location>
</feature>
<feature type="repeat" description="59">
    <location>
        <begin position="752"/>
        <end position="761"/>
    </location>
</feature>
<feature type="repeat" description="60">
    <location>
        <begin position="762"/>
        <end position="771"/>
    </location>
</feature>
<feature type="repeat" description="61">
    <location>
        <begin position="772"/>
        <end position="781"/>
    </location>
</feature>
<feature type="repeat" description="62">
    <location>
        <begin position="782"/>
        <end position="791"/>
    </location>
</feature>
<feature type="repeat" description="63">
    <location>
        <begin position="792"/>
        <end position="801"/>
    </location>
</feature>
<feature type="repeat" description="64">
    <location>
        <begin position="812"/>
        <end position="821"/>
    </location>
</feature>
<feature type="repeat" description="65">
    <location>
        <begin position="822"/>
        <end position="831"/>
    </location>
</feature>
<feature type="repeat" description="66">
    <location>
        <begin position="832"/>
        <end position="841"/>
    </location>
</feature>
<feature type="repeat" description="67">
    <location>
        <begin position="842"/>
        <end position="851"/>
    </location>
</feature>
<feature type="repeat" description="68">
    <location>
        <begin position="852"/>
        <end position="861"/>
    </location>
</feature>
<feature type="repeat" description="69">
    <location>
        <begin position="862"/>
        <end position="871"/>
    </location>
</feature>
<feature type="region of interest" description="Nonrepetitive linker">
    <location>
        <begin position="21"/>
        <end position="41"/>
    </location>
</feature>
<feature type="region of interest" description="69 X 10 AA tandem repeats of Y-[KRQ]-[PSTAHQR]-K-[AIPTSKGV]-[STR]-Y-[PTSVA]-[PSTQA]-[STYIPAQ]">
    <location>
        <begin position="124"/>
        <end position="871"/>
    </location>
</feature>
<feature type="region of interest" description="Nonapeptide 1">
    <location>
        <begin position="184"/>
        <end position="192"/>
    </location>
</feature>
<feature type="region of interest" description="Nonapeptide 2">
    <location>
        <begin position="213"/>
        <end position="221"/>
    </location>
</feature>
<feature type="region of interest" description="Disordered" evidence="2">
    <location>
        <begin position="273"/>
        <end position="781"/>
    </location>
</feature>
<feature type="compositionally biased region" description="Pro residues" evidence="2">
    <location>
        <begin position="273"/>
        <end position="282"/>
    </location>
</feature>
<feature type="compositionally biased region" description="Pro residues" evidence="2">
    <location>
        <begin position="291"/>
        <end position="302"/>
    </location>
</feature>
<feature type="compositionally biased region" description="Low complexity" evidence="2">
    <location>
        <begin position="320"/>
        <end position="360"/>
    </location>
</feature>
<feature type="compositionally biased region" description="Pro residues" evidence="2">
    <location>
        <begin position="361"/>
        <end position="372"/>
    </location>
</feature>
<feature type="compositionally biased region" description="Low complexity" evidence="2">
    <location>
        <begin position="377"/>
        <end position="390"/>
    </location>
</feature>
<feature type="compositionally biased region" description="Pro residues" evidence="2">
    <location>
        <begin position="391"/>
        <end position="402"/>
    </location>
</feature>
<feature type="compositionally biased region" description="Low complexity" evidence="2">
    <location>
        <begin position="403"/>
        <end position="450"/>
    </location>
</feature>
<feature type="compositionally biased region" description="Pro residues" evidence="2">
    <location>
        <begin position="451"/>
        <end position="462"/>
    </location>
</feature>
<feature type="compositionally biased region" description="Pro residues" evidence="2">
    <location>
        <begin position="471"/>
        <end position="482"/>
    </location>
</feature>
<feature type="compositionally biased region" description="Low complexity" evidence="2">
    <location>
        <begin position="501"/>
        <end position="540"/>
    </location>
</feature>
<feature type="compositionally biased region" description="Pro residues" evidence="2">
    <location>
        <begin position="541"/>
        <end position="552"/>
    </location>
</feature>
<feature type="compositionally biased region" description="Low complexity" evidence="2">
    <location>
        <begin position="568"/>
        <end position="590"/>
    </location>
</feature>
<feature type="compositionally biased region" description="Low complexity" evidence="2">
    <location>
        <begin position="600"/>
        <end position="640"/>
    </location>
</feature>
<feature type="compositionally biased region" description="Pro residues" evidence="2">
    <location>
        <begin position="641"/>
        <end position="652"/>
    </location>
</feature>
<feature type="compositionally biased region" description="Low complexity" evidence="2">
    <location>
        <begin position="677"/>
        <end position="690"/>
    </location>
</feature>
<feature type="compositionally biased region" description="Low complexity" evidence="2">
    <location>
        <begin position="698"/>
        <end position="719"/>
    </location>
</feature>
<feature type="compositionally biased region" description="Low complexity" evidence="2">
    <location>
        <begin position="754"/>
        <end position="763"/>
    </location>
</feature>
<keyword id="KW-0379">Hydroxylation</keyword>
<keyword id="KW-0677">Repeat</keyword>
<keyword id="KW-0964">Secreted</keyword>
<keyword id="KW-0732">Signal</keyword>
<accession>Q25434</accession>
<reference key="1">
    <citation type="journal article" date="1996" name="J. Mol. Evol.">
        <title>Adhesive protein cDNA sequence of the mussel Mytilus coruscus and its evolutionary implications.</title>
        <authorList>
            <person name="Inoue K."/>
            <person name="Takeuchi Y."/>
            <person name="Takeyama S."/>
            <person name="Yamaha E."/>
            <person name="Yamazaki F."/>
            <person name="Odo S."/>
            <person name="Harayama S."/>
        </authorList>
    </citation>
    <scope>NUCLEOTIDE SEQUENCE [MRNA]</scope>
    <source>
        <tissue>Foot</tissue>
    </source>
</reference>
<sequence>MEGIKLNLCLLCIFSCDIFALSNGNIHNVYGSAYSGASAGAYKTLPGSHPYGSKHVPVYKPMNKIPTPYISKKSYPAPYKPKGYYPTKRYQPTYGSKTNYPPIYKPIAKKLSSYKAIKTTYPAYKAKTSYPPSYKHKITYPPTYKPKITYPPTYKQKPSYPPSYKPKTTYPPTYKPKITYPPTYKRKPSYTPYKPKATYPPTYKPKITYPPTYKRKPSYTPYKPKTTYPPTYKPKISYPSIYKPKASYVSSYKSKKTYPPTYKPKISYPPTYKPKPSYPPTYKPKVTYPPTYKPKPSYPPTYKPKITYPPTYKPKPSYPTPYKQKPSYPPIYKSKSSYPTSYKSKKTYPPTYKPKITYPPTYKPKPSYPPSYKPKKTYSPTYKPKITYPPTYKPKPSYPPSYKPKTTYPPTYKPKISYPPTYKPKASYVSSYKSKKTYPPTYKPKISYPPTYKPKPSYPPTYKPKITYPPTYKPKPSYPPTYKPKITYPPTYKRKPSYPTPYKQKPSYPPIYKSKSSYPTSYKSKKTYPPTYKPKITYPPTYKPKPSYPPSYKPKTTYPPTYKPKIRYPPTYKPKASYPPTYKPKITYPPTYKPKPSYPTPYKQKPSYPPIYKSKSSYPTAYKSKKTYPPTYKPKITYPPTYKPKPSYPPSYRPKITYPPTYKPKKSYPQAYKSKGSYPPSYQPKKTYPPSYKPKKTYPPTYKPKISYPPTYKTKPSYPASYKRKTSYPPTYKPKISYPSTYKAKPSYPPTYKPKPSYASSYKPKIRYPPTYKPKPSYASSYKPKIRYPPTYKPKPSYASSYKPKIRYPPTYKPKPSYASSYKPKITYPPTYKPKISYPPTYKPKITYPPTYKPKISYPPAYKPKISYPSQY</sequence>